<name>TUSC_YERPG</name>
<evidence type="ECO:0000255" key="1">
    <source>
        <dbReference type="HAMAP-Rule" id="MF_00389"/>
    </source>
</evidence>
<feature type="chain" id="PRO_1000122854" description="Protein TusC">
    <location>
        <begin position="1"/>
        <end position="121"/>
    </location>
</feature>
<comment type="function">
    <text evidence="1">Part of a sulfur-relay system required for 2-thiolation of 5-methylaminomethyl-2-thiouridine (mnm(5)s(2)U) at tRNA wobble positions.</text>
</comment>
<comment type="subunit">
    <text evidence="1">Heterohexamer, formed by a dimer of trimers. The hexameric TusBCD complex contains 2 copies each of TusB, TusC and TusD. The TusBCD complex interacts with TusE.</text>
</comment>
<comment type="subcellular location">
    <subcellularLocation>
        <location evidence="1">Cytoplasm</location>
    </subcellularLocation>
</comment>
<comment type="similarity">
    <text evidence="1">Belongs to the DsrF/TusC family.</text>
</comment>
<gene>
    <name evidence="1" type="primary">tusC</name>
    <name type="ordered locus">YpAngola_A3680</name>
</gene>
<organism>
    <name type="scientific">Yersinia pestis bv. Antiqua (strain Angola)</name>
    <dbReference type="NCBI Taxonomy" id="349746"/>
    <lineage>
        <taxon>Bacteria</taxon>
        <taxon>Pseudomonadati</taxon>
        <taxon>Pseudomonadota</taxon>
        <taxon>Gammaproteobacteria</taxon>
        <taxon>Enterobacterales</taxon>
        <taxon>Yersiniaceae</taxon>
        <taxon>Yersinia</taxon>
    </lineage>
</organism>
<protein>
    <recommendedName>
        <fullName evidence="1">Protein TusC</fullName>
    </recommendedName>
    <alternativeName>
        <fullName evidence="1">tRNA 2-thiouridine synthesizing protein C</fullName>
    </alternativeName>
</protein>
<proteinExistence type="inferred from homology"/>
<sequence>MARKRIAFIFTQGPHGSSAGREGLDALLATSALSEDIGVFFISDGVLQLLPQQQPEKILARNYIATFGVLPLYDVENCYLCERSLQQRGLSKMADWILDVTVLSPADLRRELGTYDVVLTF</sequence>
<accession>A9R466</accession>
<dbReference type="EMBL" id="CP000901">
    <property type="protein sequence ID" value="ABX86803.1"/>
    <property type="molecule type" value="Genomic_DNA"/>
</dbReference>
<dbReference type="RefSeq" id="WP_002212321.1">
    <property type="nucleotide sequence ID" value="NZ_CP009935.1"/>
</dbReference>
<dbReference type="SMR" id="A9R466"/>
<dbReference type="GeneID" id="57974405"/>
<dbReference type="KEGG" id="ypg:YpAngola_A3680"/>
<dbReference type="PATRIC" id="fig|349746.12.peg.385"/>
<dbReference type="GO" id="GO:0005737">
    <property type="term" value="C:cytoplasm"/>
    <property type="evidence" value="ECO:0007669"/>
    <property type="project" value="UniProtKB-SubCell"/>
</dbReference>
<dbReference type="GO" id="GO:0008033">
    <property type="term" value="P:tRNA processing"/>
    <property type="evidence" value="ECO:0007669"/>
    <property type="project" value="UniProtKB-UniRule"/>
</dbReference>
<dbReference type="Gene3D" id="3.40.1260.10">
    <property type="entry name" value="DsrEFH-like"/>
    <property type="match status" value="1"/>
</dbReference>
<dbReference type="HAMAP" id="MF_00389">
    <property type="entry name" value="Thiourid_synth_C"/>
    <property type="match status" value="1"/>
</dbReference>
<dbReference type="InterPro" id="IPR027396">
    <property type="entry name" value="DsrEFH-like"/>
</dbReference>
<dbReference type="InterPro" id="IPR003787">
    <property type="entry name" value="Sulphur_relay_DsrE/F-like"/>
</dbReference>
<dbReference type="InterPro" id="IPR037450">
    <property type="entry name" value="Sulphur_relay_TusC"/>
</dbReference>
<dbReference type="InterPro" id="IPR017462">
    <property type="entry name" value="Sulphur_relay_TusC/DsrF"/>
</dbReference>
<dbReference type="NCBIfam" id="NF001238">
    <property type="entry name" value="PRK00211.1"/>
    <property type="match status" value="1"/>
</dbReference>
<dbReference type="NCBIfam" id="TIGR03010">
    <property type="entry name" value="sulf_tusC_dsrF"/>
    <property type="match status" value="1"/>
</dbReference>
<dbReference type="PANTHER" id="PTHR38780">
    <property type="entry name" value="PROTEIN TUSC"/>
    <property type="match status" value="1"/>
</dbReference>
<dbReference type="PANTHER" id="PTHR38780:SF1">
    <property type="entry name" value="PROTEIN TUSC"/>
    <property type="match status" value="1"/>
</dbReference>
<dbReference type="Pfam" id="PF02635">
    <property type="entry name" value="DsrE"/>
    <property type="match status" value="1"/>
</dbReference>
<dbReference type="SUPFAM" id="SSF75169">
    <property type="entry name" value="DsrEFH-like"/>
    <property type="match status" value="1"/>
</dbReference>
<reference key="1">
    <citation type="journal article" date="2010" name="J. Bacteriol.">
        <title>Genome sequence of the deep-rooted Yersinia pestis strain Angola reveals new insights into the evolution and pangenome of the plague bacterium.</title>
        <authorList>
            <person name="Eppinger M."/>
            <person name="Worsham P.L."/>
            <person name="Nikolich M.P."/>
            <person name="Riley D.R."/>
            <person name="Sebastian Y."/>
            <person name="Mou S."/>
            <person name="Achtman M."/>
            <person name="Lindler L.E."/>
            <person name="Ravel J."/>
        </authorList>
    </citation>
    <scope>NUCLEOTIDE SEQUENCE [LARGE SCALE GENOMIC DNA]</scope>
    <source>
        <strain>Angola</strain>
    </source>
</reference>
<keyword id="KW-0963">Cytoplasm</keyword>
<keyword id="KW-0819">tRNA processing</keyword>